<protein>
    <recommendedName>
        <fullName evidence="1">Uridine kinase</fullName>
        <ecNumber evidence="1">2.7.1.48</ecNumber>
    </recommendedName>
    <alternativeName>
        <fullName evidence="1">Cytidine monophosphokinase</fullName>
    </alternativeName>
    <alternativeName>
        <fullName evidence="1">Uridine monophosphokinase</fullName>
    </alternativeName>
</protein>
<gene>
    <name evidence="1" type="primary">udk</name>
    <name type="ordered locus">SUB1217</name>
</gene>
<dbReference type="EC" id="2.7.1.48" evidence="1"/>
<dbReference type="EMBL" id="AM946015">
    <property type="protein sequence ID" value="CAR42665.1"/>
    <property type="molecule type" value="Genomic_DNA"/>
</dbReference>
<dbReference type="RefSeq" id="WP_012658695.1">
    <property type="nucleotide sequence ID" value="NC_012004.1"/>
</dbReference>
<dbReference type="SMR" id="B9DSN2"/>
<dbReference type="STRING" id="218495.SUB1217"/>
<dbReference type="GeneID" id="93826488"/>
<dbReference type="KEGG" id="sub:SUB1217"/>
<dbReference type="eggNOG" id="COG0572">
    <property type="taxonomic scope" value="Bacteria"/>
</dbReference>
<dbReference type="HOGENOM" id="CLU_021278_1_2_9"/>
<dbReference type="OrthoDB" id="9777642at2"/>
<dbReference type="UniPathway" id="UPA00574">
    <property type="reaction ID" value="UER00637"/>
</dbReference>
<dbReference type="UniPathway" id="UPA00579">
    <property type="reaction ID" value="UER00640"/>
</dbReference>
<dbReference type="Proteomes" id="UP000000449">
    <property type="component" value="Chromosome"/>
</dbReference>
<dbReference type="GO" id="GO:0005737">
    <property type="term" value="C:cytoplasm"/>
    <property type="evidence" value="ECO:0007669"/>
    <property type="project" value="UniProtKB-SubCell"/>
</dbReference>
<dbReference type="GO" id="GO:0005524">
    <property type="term" value="F:ATP binding"/>
    <property type="evidence" value="ECO:0007669"/>
    <property type="project" value="UniProtKB-UniRule"/>
</dbReference>
<dbReference type="GO" id="GO:0043771">
    <property type="term" value="F:cytidine kinase activity"/>
    <property type="evidence" value="ECO:0007669"/>
    <property type="project" value="RHEA"/>
</dbReference>
<dbReference type="GO" id="GO:0004849">
    <property type="term" value="F:uridine kinase activity"/>
    <property type="evidence" value="ECO:0007669"/>
    <property type="project" value="UniProtKB-UniRule"/>
</dbReference>
<dbReference type="GO" id="GO:0044211">
    <property type="term" value="P:CTP salvage"/>
    <property type="evidence" value="ECO:0007669"/>
    <property type="project" value="UniProtKB-UniRule"/>
</dbReference>
<dbReference type="GO" id="GO:0044206">
    <property type="term" value="P:UMP salvage"/>
    <property type="evidence" value="ECO:0007669"/>
    <property type="project" value="UniProtKB-UniRule"/>
</dbReference>
<dbReference type="CDD" id="cd02023">
    <property type="entry name" value="UMPK"/>
    <property type="match status" value="1"/>
</dbReference>
<dbReference type="Gene3D" id="3.40.50.300">
    <property type="entry name" value="P-loop containing nucleotide triphosphate hydrolases"/>
    <property type="match status" value="1"/>
</dbReference>
<dbReference type="HAMAP" id="MF_00551">
    <property type="entry name" value="Uridine_kinase"/>
    <property type="match status" value="1"/>
</dbReference>
<dbReference type="InterPro" id="IPR027417">
    <property type="entry name" value="P-loop_NTPase"/>
</dbReference>
<dbReference type="InterPro" id="IPR006083">
    <property type="entry name" value="PRK/URK"/>
</dbReference>
<dbReference type="InterPro" id="IPR026008">
    <property type="entry name" value="Uridine_kinase"/>
</dbReference>
<dbReference type="InterPro" id="IPR000764">
    <property type="entry name" value="Uridine_kinase-like"/>
</dbReference>
<dbReference type="NCBIfam" id="NF004018">
    <property type="entry name" value="PRK05480.1"/>
    <property type="match status" value="1"/>
</dbReference>
<dbReference type="NCBIfam" id="TIGR00235">
    <property type="entry name" value="udk"/>
    <property type="match status" value="1"/>
</dbReference>
<dbReference type="PANTHER" id="PTHR10285">
    <property type="entry name" value="URIDINE KINASE"/>
    <property type="match status" value="1"/>
</dbReference>
<dbReference type="Pfam" id="PF00485">
    <property type="entry name" value="PRK"/>
    <property type="match status" value="1"/>
</dbReference>
<dbReference type="PRINTS" id="PR00988">
    <property type="entry name" value="URIDINKINASE"/>
</dbReference>
<dbReference type="SUPFAM" id="SSF52540">
    <property type="entry name" value="P-loop containing nucleoside triphosphate hydrolases"/>
    <property type="match status" value="1"/>
</dbReference>
<name>URK_STRU0</name>
<organism>
    <name type="scientific">Streptococcus uberis (strain ATCC BAA-854 / 0140J)</name>
    <dbReference type="NCBI Taxonomy" id="218495"/>
    <lineage>
        <taxon>Bacteria</taxon>
        <taxon>Bacillati</taxon>
        <taxon>Bacillota</taxon>
        <taxon>Bacilli</taxon>
        <taxon>Lactobacillales</taxon>
        <taxon>Streptococcaceae</taxon>
        <taxon>Streptococcus</taxon>
    </lineage>
</organism>
<keyword id="KW-0067">ATP-binding</keyword>
<keyword id="KW-0963">Cytoplasm</keyword>
<keyword id="KW-0418">Kinase</keyword>
<keyword id="KW-0547">Nucleotide-binding</keyword>
<keyword id="KW-1185">Reference proteome</keyword>
<keyword id="KW-0808">Transferase</keyword>
<evidence type="ECO:0000255" key="1">
    <source>
        <dbReference type="HAMAP-Rule" id="MF_00551"/>
    </source>
</evidence>
<reference key="1">
    <citation type="journal article" date="2009" name="BMC Genomics">
        <title>Evidence for niche adaptation in the genome of the bovine pathogen Streptococcus uberis.</title>
        <authorList>
            <person name="Ward P.N."/>
            <person name="Holden M.T.G."/>
            <person name="Leigh J.A."/>
            <person name="Lennard N."/>
            <person name="Bignell A."/>
            <person name="Barron A."/>
            <person name="Clark L."/>
            <person name="Quail M.A."/>
            <person name="Woodward J."/>
            <person name="Barrell B.G."/>
            <person name="Egan S.A."/>
            <person name="Field T.R."/>
            <person name="Maskell D."/>
            <person name="Kehoe M."/>
            <person name="Dowson C.G."/>
            <person name="Chanter N."/>
            <person name="Whatmore A.M."/>
            <person name="Bentley S.D."/>
            <person name="Parkhill J."/>
        </authorList>
    </citation>
    <scope>NUCLEOTIDE SEQUENCE [LARGE SCALE GENOMIC DNA]</scope>
    <source>
        <strain>ATCC BAA-854 / 0140J</strain>
    </source>
</reference>
<accession>B9DSN2</accession>
<feature type="chain" id="PRO_1000200527" description="Uridine kinase">
    <location>
        <begin position="1"/>
        <end position="210"/>
    </location>
</feature>
<feature type="binding site" evidence="1">
    <location>
        <begin position="12"/>
        <end position="19"/>
    </location>
    <ligand>
        <name>ATP</name>
        <dbReference type="ChEBI" id="CHEBI:30616"/>
    </ligand>
</feature>
<comment type="catalytic activity">
    <reaction evidence="1">
        <text>uridine + ATP = UMP + ADP + H(+)</text>
        <dbReference type="Rhea" id="RHEA:16825"/>
        <dbReference type="ChEBI" id="CHEBI:15378"/>
        <dbReference type="ChEBI" id="CHEBI:16704"/>
        <dbReference type="ChEBI" id="CHEBI:30616"/>
        <dbReference type="ChEBI" id="CHEBI:57865"/>
        <dbReference type="ChEBI" id="CHEBI:456216"/>
        <dbReference type="EC" id="2.7.1.48"/>
    </reaction>
</comment>
<comment type="catalytic activity">
    <reaction evidence="1">
        <text>cytidine + ATP = CMP + ADP + H(+)</text>
        <dbReference type="Rhea" id="RHEA:24674"/>
        <dbReference type="ChEBI" id="CHEBI:15378"/>
        <dbReference type="ChEBI" id="CHEBI:17562"/>
        <dbReference type="ChEBI" id="CHEBI:30616"/>
        <dbReference type="ChEBI" id="CHEBI:60377"/>
        <dbReference type="ChEBI" id="CHEBI:456216"/>
        <dbReference type="EC" id="2.7.1.48"/>
    </reaction>
</comment>
<comment type="pathway">
    <text evidence="1">Pyrimidine metabolism; CTP biosynthesis via salvage pathway; CTP from cytidine: step 1/3.</text>
</comment>
<comment type="pathway">
    <text evidence="1">Pyrimidine metabolism; UMP biosynthesis via salvage pathway; UMP from uridine: step 1/1.</text>
</comment>
<comment type="subcellular location">
    <subcellularLocation>
        <location evidence="1">Cytoplasm</location>
    </subcellularLocation>
</comment>
<comment type="similarity">
    <text evidence="1">Belongs to the uridine kinase family.</text>
</comment>
<proteinExistence type="inferred from homology"/>
<sequence>MRRKPIIIGVTGGSGGGKTSVSRAILDSFPNARIAMIQHDSYYKDQAHLSFEERVKTNYDHPLAFDTDFMIEQLKELLKGRPVDIPVYDYKAHTRSDKTFRQEPQDVIIVEGILVLEDERLRDLMDIKLFVDTDDDIRIIRRIKRDMMERGRSLDSIIEQYTTVVKPMYHQFIEPSKRYADIIVPEGVSNVVAIDLINTKIASILAEIDR</sequence>